<organism>
    <name type="scientific">Arabidopsis thaliana</name>
    <name type="common">Mouse-ear cress</name>
    <dbReference type="NCBI Taxonomy" id="3702"/>
    <lineage>
        <taxon>Eukaryota</taxon>
        <taxon>Viridiplantae</taxon>
        <taxon>Streptophyta</taxon>
        <taxon>Embryophyta</taxon>
        <taxon>Tracheophyta</taxon>
        <taxon>Spermatophyta</taxon>
        <taxon>Magnoliopsida</taxon>
        <taxon>eudicotyledons</taxon>
        <taxon>Gunneridae</taxon>
        <taxon>Pentapetalae</taxon>
        <taxon>rosids</taxon>
        <taxon>malvids</taxon>
        <taxon>Brassicales</taxon>
        <taxon>Brassicaceae</taxon>
        <taxon>Camelineae</taxon>
        <taxon>Arabidopsis</taxon>
    </lineage>
</organism>
<feature type="chain" id="PRO_0000431357" description="Serine/threonine-protein kinase AGC1-7">
    <location>
        <begin position="1"/>
        <end position="555"/>
    </location>
</feature>
<feature type="domain" description="Protein kinase" evidence="1">
    <location>
        <begin position="146"/>
        <end position="480"/>
    </location>
</feature>
<feature type="domain" description="AGC-kinase C-terminal" evidence="7">
    <location>
        <begin position="481"/>
        <end position="555"/>
    </location>
</feature>
<feature type="region of interest" description="Disordered" evidence="2">
    <location>
        <begin position="1"/>
        <end position="126"/>
    </location>
</feature>
<feature type="region of interest" description="Disordered" evidence="2">
    <location>
        <begin position="514"/>
        <end position="547"/>
    </location>
</feature>
<feature type="compositionally biased region" description="Basic and acidic residues" evidence="2">
    <location>
        <begin position="7"/>
        <end position="16"/>
    </location>
</feature>
<feature type="compositionally biased region" description="Basic and acidic residues" evidence="2">
    <location>
        <begin position="35"/>
        <end position="54"/>
    </location>
</feature>
<feature type="compositionally biased region" description="Low complexity" evidence="2">
    <location>
        <begin position="84"/>
        <end position="118"/>
    </location>
</feature>
<feature type="compositionally biased region" description="Gly residues" evidence="2">
    <location>
        <begin position="526"/>
        <end position="537"/>
    </location>
</feature>
<feature type="active site" description="Proton acceptor" evidence="1">
    <location>
        <position position="271"/>
    </location>
</feature>
<feature type="binding site" evidence="1">
    <location>
        <begin position="152"/>
        <end position="160"/>
    </location>
    <ligand>
        <name>ATP</name>
        <dbReference type="ChEBI" id="CHEBI:30616"/>
    </ligand>
</feature>
<feature type="binding site" evidence="1">
    <location>
        <position position="175"/>
    </location>
    <ligand>
        <name>ATP</name>
        <dbReference type="ChEBI" id="CHEBI:30616"/>
    </ligand>
</feature>
<accession>Q1PFB9</accession>
<accession>O64528</accession>
<dbReference type="EC" id="2.7.11.1" evidence="3"/>
<dbReference type="EMBL" id="AC002986">
    <property type="protein sequence ID" value="AAC17041.1"/>
    <property type="status" value="ALT_SEQ"/>
    <property type="molecule type" value="Genomic_DNA"/>
</dbReference>
<dbReference type="EMBL" id="CP002684">
    <property type="protein sequence ID" value="AEE36222.1"/>
    <property type="molecule type" value="Genomic_DNA"/>
</dbReference>
<dbReference type="EMBL" id="CP002684">
    <property type="protein sequence ID" value="AEE36223.1"/>
    <property type="molecule type" value="Genomic_DNA"/>
</dbReference>
<dbReference type="EMBL" id="CP002684">
    <property type="protein sequence ID" value="ANM59156.1"/>
    <property type="molecule type" value="Genomic_DNA"/>
</dbReference>
<dbReference type="EMBL" id="CP002684">
    <property type="protein sequence ID" value="ANM59157.1"/>
    <property type="molecule type" value="Genomic_DNA"/>
</dbReference>
<dbReference type="EMBL" id="DQ446444">
    <property type="protein sequence ID" value="ABE65785.1"/>
    <property type="molecule type" value="mRNA"/>
</dbReference>
<dbReference type="PIR" id="T01032">
    <property type="entry name" value="T01032"/>
</dbReference>
<dbReference type="RefSeq" id="NP_001185434.1">
    <property type="nucleotide sequence ID" value="NM_001198505.1"/>
</dbReference>
<dbReference type="RefSeq" id="NP_001319411.1">
    <property type="nucleotide sequence ID" value="NM_001334875.1"/>
</dbReference>
<dbReference type="RefSeq" id="NP_001319412.1">
    <property type="nucleotide sequence ID" value="NM_001334876.1"/>
</dbReference>
<dbReference type="RefSeq" id="NP_178045.2">
    <property type="nucleotide sequence ID" value="NM_106575.4"/>
</dbReference>
<dbReference type="SMR" id="Q1PFB9"/>
<dbReference type="BioGRID" id="29484">
    <property type="interactions" value="1"/>
</dbReference>
<dbReference type="FunCoup" id="Q1PFB9">
    <property type="interactions" value="134"/>
</dbReference>
<dbReference type="IntAct" id="Q1PFB9">
    <property type="interactions" value="1"/>
</dbReference>
<dbReference type="STRING" id="3702.Q1PFB9"/>
<dbReference type="PaxDb" id="3702-AT1G79250.2"/>
<dbReference type="ProteomicsDB" id="244660"/>
<dbReference type="EnsemblPlants" id="AT1G79250.1">
    <property type="protein sequence ID" value="AT1G79250.1"/>
    <property type="gene ID" value="AT1G79250"/>
</dbReference>
<dbReference type="EnsemblPlants" id="AT1G79250.2">
    <property type="protein sequence ID" value="AT1G79250.2"/>
    <property type="gene ID" value="AT1G79250"/>
</dbReference>
<dbReference type="EnsemblPlants" id="AT1G79250.3">
    <property type="protein sequence ID" value="AT1G79250.3"/>
    <property type="gene ID" value="AT1G79250"/>
</dbReference>
<dbReference type="EnsemblPlants" id="AT1G79250.4">
    <property type="protein sequence ID" value="AT1G79250.4"/>
    <property type="gene ID" value="AT1G79250"/>
</dbReference>
<dbReference type="GeneID" id="844265"/>
<dbReference type="Gramene" id="AT1G79250.1">
    <property type="protein sequence ID" value="AT1G79250.1"/>
    <property type="gene ID" value="AT1G79250"/>
</dbReference>
<dbReference type="Gramene" id="AT1G79250.2">
    <property type="protein sequence ID" value="AT1G79250.2"/>
    <property type="gene ID" value="AT1G79250"/>
</dbReference>
<dbReference type="Gramene" id="AT1G79250.3">
    <property type="protein sequence ID" value="AT1G79250.3"/>
    <property type="gene ID" value="AT1G79250"/>
</dbReference>
<dbReference type="Gramene" id="AT1G79250.4">
    <property type="protein sequence ID" value="AT1G79250.4"/>
    <property type="gene ID" value="AT1G79250"/>
</dbReference>
<dbReference type="KEGG" id="ath:AT1G79250"/>
<dbReference type="Araport" id="AT1G79250"/>
<dbReference type="TAIR" id="AT1G79250">
    <property type="gene designation" value="AGC1.7"/>
</dbReference>
<dbReference type="eggNOG" id="KOG0610">
    <property type="taxonomic scope" value="Eukaryota"/>
</dbReference>
<dbReference type="HOGENOM" id="CLU_000288_63_30_1"/>
<dbReference type="InParanoid" id="Q1PFB9"/>
<dbReference type="OMA" id="WDAVNML"/>
<dbReference type="PhylomeDB" id="Q1PFB9"/>
<dbReference type="PRO" id="PR:Q1PFB9"/>
<dbReference type="Proteomes" id="UP000006548">
    <property type="component" value="Chromosome 1"/>
</dbReference>
<dbReference type="ExpressionAtlas" id="Q1PFB9">
    <property type="expression patterns" value="baseline and differential"/>
</dbReference>
<dbReference type="GO" id="GO:0005737">
    <property type="term" value="C:cytoplasm"/>
    <property type="evidence" value="ECO:0007669"/>
    <property type="project" value="UniProtKB-SubCell"/>
</dbReference>
<dbReference type="GO" id="GO:0005524">
    <property type="term" value="F:ATP binding"/>
    <property type="evidence" value="ECO:0007669"/>
    <property type="project" value="UniProtKB-KW"/>
</dbReference>
<dbReference type="GO" id="GO:0016301">
    <property type="term" value="F:kinase activity"/>
    <property type="evidence" value="ECO:0000250"/>
    <property type="project" value="TAIR"/>
</dbReference>
<dbReference type="GO" id="GO:0106310">
    <property type="term" value="F:protein serine kinase activity"/>
    <property type="evidence" value="ECO:0007669"/>
    <property type="project" value="RHEA"/>
</dbReference>
<dbReference type="GO" id="GO:0004674">
    <property type="term" value="F:protein serine/threonine kinase activity"/>
    <property type="evidence" value="ECO:0007669"/>
    <property type="project" value="UniProtKB-KW"/>
</dbReference>
<dbReference type="GO" id="GO:0009860">
    <property type="term" value="P:pollen tube growth"/>
    <property type="evidence" value="ECO:0000316"/>
    <property type="project" value="TAIR"/>
</dbReference>
<dbReference type="GO" id="GO:0009826">
    <property type="term" value="P:unidimensional cell growth"/>
    <property type="evidence" value="ECO:0000316"/>
    <property type="project" value="TAIR"/>
</dbReference>
<dbReference type="CDD" id="cd05574">
    <property type="entry name" value="STKc_phototropin_like"/>
    <property type="match status" value="1"/>
</dbReference>
<dbReference type="FunFam" id="1.10.510.10:FF:000295">
    <property type="entry name" value="Serine/threonine-protein kinase AGC1-7"/>
    <property type="match status" value="1"/>
</dbReference>
<dbReference type="FunFam" id="3.30.200.20:FF:000032">
    <property type="entry name" value="Serine/threonine-protein kinase D6PK-like"/>
    <property type="match status" value="1"/>
</dbReference>
<dbReference type="FunFam" id="1.10.510.10:FF:000028">
    <property type="entry name" value="serine/threonine-protein kinase D6PK-like"/>
    <property type="match status" value="1"/>
</dbReference>
<dbReference type="Gene3D" id="3.30.200.20">
    <property type="entry name" value="Phosphorylase Kinase, domain 1"/>
    <property type="match status" value="1"/>
</dbReference>
<dbReference type="Gene3D" id="1.10.510.10">
    <property type="entry name" value="Transferase(Phosphotransferase) domain 1"/>
    <property type="match status" value="2"/>
</dbReference>
<dbReference type="InterPro" id="IPR011009">
    <property type="entry name" value="Kinase-like_dom_sf"/>
</dbReference>
<dbReference type="InterPro" id="IPR000719">
    <property type="entry name" value="Prot_kinase_dom"/>
</dbReference>
<dbReference type="InterPro" id="IPR008271">
    <property type="entry name" value="Ser/Thr_kinase_AS"/>
</dbReference>
<dbReference type="PANTHER" id="PTHR45637">
    <property type="entry name" value="FLIPPASE KINASE 1-RELATED"/>
    <property type="match status" value="1"/>
</dbReference>
<dbReference type="Pfam" id="PF00069">
    <property type="entry name" value="Pkinase"/>
    <property type="match status" value="2"/>
</dbReference>
<dbReference type="SMART" id="SM00220">
    <property type="entry name" value="S_TKc"/>
    <property type="match status" value="1"/>
</dbReference>
<dbReference type="SUPFAM" id="SSF56112">
    <property type="entry name" value="Protein kinase-like (PK-like)"/>
    <property type="match status" value="1"/>
</dbReference>
<dbReference type="PROSITE" id="PS50011">
    <property type="entry name" value="PROTEIN_KINASE_DOM"/>
    <property type="match status" value="1"/>
</dbReference>
<dbReference type="PROSITE" id="PS00108">
    <property type="entry name" value="PROTEIN_KINASE_ST"/>
    <property type="match status" value="1"/>
</dbReference>
<gene>
    <name evidence="5" type="primary">AGC1-7</name>
    <name evidence="6" type="synonym">AGC1.7</name>
    <name evidence="8" type="ordered locus">At1g79250</name>
    <name evidence="9" type="ORF">YUP8H12R.15</name>
</gene>
<comment type="function">
    <text evidence="4">Functions redudantly with AGC1-5 as signaling component in the pollen tube. Required for polarized growth of pollen tubes.</text>
</comment>
<comment type="catalytic activity">
    <reaction evidence="3">
        <text>L-seryl-[protein] + ATP = O-phospho-L-seryl-[protein] + ADP + H(+)</text>
        <dbReference type="Rhea" id="RHEA:17989"/>
        <dbReference type="Rhea" id="RHEA-COMP:9863"/>
        <dbReference type="Rhea" id="RHEA-COMP:11604"/>
        <dbReference type="ChEBI" id="CHEBI:15378"/>
        <dbReference type="ChEBI" id="CHEBI:29999"/>
        <dbReference type="ChEBI" id="CHEBI:30616"/>
        <dbReference type="ChEBI" id="CHEBI:83421"/>
        <dbReference type="ChEBI" id="CHEBI:456216"/>
        <dbReference type="EC" id="2.7.11.1"/>
    </reaction>
</comment>
<comment type="catalytic activity">
    <reaction evidence="3">
        <text>L-threonyl-[protein] + ATP = O-phospho-L-threonyl-[protein] + ADP + H(+)</text>
        <dbReference type="Rhea" id="RHEA:46608"/>
        <dbReference type="Rhea" id="RHEA-COMP:11060"/>
        <dbReference type="Rhea" id="RHEA-COMP:11605"/>
        <dbReference type="ChEBI" id="CHEBI:15378"/>
        <dbReference type="ChEBI" id="CHEBI:30013"/>
        <dbReference type="ChEBI" id="CHEBI:30616"/>
        <dbReference type="ChEBI" id="CHEBI:61977"/>
        <dbReference type="ChEBI" id="CHEBI:456216"/>
        <dbReference type="EC" id="2.7.11.1"/>
    </reaction>
</comment>
<comment type="activity regulation">
    <text evidence="3">Activated by PDPK1/PDK1.</text>
</comment>
<comment type="subunit">
    <text evidence="3">Interacts with PDPK1/PDK1.</text>
</comment>
<comment type="interaction">
    <interactant intactId="EBI-1103730">
        <id>Q1PFB9</id>
    </interactant>
    <interactant intactId="EBI-1103587">
        <id>Q9XF67</id>
        <label>PDPK1</label>
    </interactant>
    <organismsDiffer>false</organismsDiffer>
    <experiments>2</experiments>
</comment>
<comment type="subcellular location">
    <subcellularLocation>
        <location evidence="3">Cytoplasm</location>
    </subcellularLocation>
</comment>
<comment type="tissue specificity">
    <text evidence="4">Specifically expressed in pollen grains.</text>
</comment>
<comment type="PTM">
    <text evidence="3">Autophosphorylated and phosphorylated by PDPK1/PDK1.</text>
</comment>
<comment type="disruption phenotype">
    <text evidence="4">No visible phenotype under normal growth conditions, but pollen of the double mutants agc1.5 and agc1.7 is impaired in polarized growth of pollen tube.</text>
</comment>
<comment type="similarity">
    <text evidence="7">Belongs to the protein kinase superfamily. AGC Ser/Thr protein kinase family.</text>
</comment>
<comment type="sequence caution" evidence="7">
    <conflict type="erroneous gene model prediction">
        <sequence resource="EMBL-CDS" id="AAC17041"/>
    </conflict>
</comment>
<reference key="1">
    <citation type="journal article" date="2000" name="Nature">
        <title>Sequence and analysis of chromosome 1 of the plant Arabidopsis thaliana.</title>
        <authorList>
            <person name="Theologis A."/>
            <person name="Ecker J.R."/>
            <person name="Palm C.J."/>
            <person name="Federspiel N.A."/>
            <person name="Kaul S."/>
            <person name="White O."/>
            <person name="Alonso J."/>
            <person name="Altafi H."/>
            <person name="Araujo R."/>
            <person name="Bowman C.L."/>
            <person name="Brooks S.Y."/>
            <person name="Buehler E."/>
            <person name="Chan A."/>
            <person name="Chao Q."/>
            <person name="Chen H."/>
            <person name="Cheuk R.F."/>
            <person name="Chin C.W."/>
            <person name="Chung M.K."/>
            <person name="Conn L."/>
            <person name="Conway A.B."/>
            <person name="Conway A.R."/>
            <person name="Creasy T.H."/>
            <person name="Dewar K."/>
            <person name="Dunn P."/>
            <person name="Etgu P."/>
            <person name="Feldblyum T.V."/>
            <person name="Feng J.-D."/>
            <person name="Fong B."/>
            <person name="Fujii C.Y."/>
            <person name="Gill J.E."/>
            <person name="Goldsmith A.D."/>
            <person name="Haas B."/>
            <person name="Hansen N.F."/>
            <person name="Hughes B."/>
            <person name="Huizar L."/>
            <person name="Hunter J.L."/>
            <person name="Jenkins J."/>
            <person name="Johnson-Hopson C."/>
            <person name="Khan S."/>
            <person name="Khaykin E."/>
            <person name="Kim C.J."/>
            <person name="Koo H.L."/>
            <person name="Kremenetskaia I."/>
            <person name="Kurtz D.B."/>
            <person name="Kwan A."/>
            <person name="Lam B."/>
            <person name="Langin-Hooper S."/>
            <person name="Lee A."/>
            <person name="Lee J.M."/>
            <person name="Lenz C.A."/>
            <person name="Li J.H."/>
            <person name="Li Y.-P."/>
            <person name="Lin X."/>
            <person name="Liu S.X."/>
            <person name="Liu Z.A."/>
            <person name="Luros J.S."/>
            <person name="Maiti R."/>
            <person name="Marziali A."/>
            <person name="Militscher J."/>
            <person name="Miranda M."/>
            <person name="Nguyen M."/>
            <person name="Nierman W.C."/>
            <person name="Osborne B.I."/>
            <person name="Pai G."/>
            <person name="Peterson J."/>
            <person name="Pham P.K."/>
            <person name="Rizzo M."/>
            <person name="Rooney T."/>
            <person name="Rowley D."/>
            <person name="Sakano H."/>
            <person name="Salzberg S.L."/>
            <person name="Schwartz J.R."/>
            <person name="Shinn P."/>
            <person name="Southwick A.M."/>
            <person name="Sun H."/>
            <person name="Tallon L.J."/>
            <person name="Tambunga G."/>
            <person name="Toriumi M.J."/>
            <person name="Town C.D."/>
            <person name="Utterback T."/>
            <person name="Van Aken S."/>
            <person name="Vaysberg M."/>
            <person name="Vysotskaia V.S."/>
            <person name="Walker M."/>
            <person name="Wu D."/>
            <person name="Yu G."/>
            <person name="Fraser C.M."/>
            <person name="Venter J.C."/>
            <person name="Davis R.W."/>
        </authorList>
    </citation>
    <scope>NUCLEOTIDE SEQUENCE [LARGE SCALE GENOMIC DNA]</scope>
    <source>
        <strain>cv. Columbia</strain>
    </source>
</reference>
<reference key="2">
    <citation type="journal article" date="2017" name="Plant J.">
        <title>Araport11: a complete reannotation of the Arabidopsis thaliana reference genome.</title>
        <authorList>
            <person name="Cheng C.Y."/>
            <person name="Krishnakumar V."/>
            <person name="Chan A.P."/>
            <person name="Thibaud-Nissen F."/>
            <person name="Schobel S."/>
            <person name="Town C.D."/>
        </authorList>
    </citation>
    <scope>GENOME REANNOTATION</scope>
    <source>
        <strain>cv. Columbia</strain>
    </source>
</reference>
<reference key="3">
    <citation type="journal article" date="2006" name="Plant Biotechnol. J.">
        <title>Simultaneous high-throughput recombinational cloning of open reading frames in closed and open configurations.</title>
        <authorList>
            <person name="Underwood B.A."/>
            <person name="Vanderhaeghen R."/>
            <person name="Whitford R."/>
            <person name="Town C.D."/>
            <person name="Hilson P."/>
        </authorList>
    </citation>
    <scope>NUCLEOTIDE SEQUENCE [LARGE SCALE MRNA]</scope>
    <source>
        <strain>cv. Columbia</strain>
    </source>
</reference>
<reference key="4">
    <citation type="journal article" date="2003" name="Trends Plant Sci.">
        <title>Growth signalling pathways in Arabidopsis and the AGC protein kinases.</title>
        <authorList>
            <person name="Boegre L."/>
            <person name="Okresz L."/>
            <person name="Henriques R."/>
            <person name="Anthony R.G."/>
        </authorList>
    </citation>
    <scope>GENE FAMILY</scope>
</reference>
<reference key="5">
    <citation type="journal article" date="2006" name="J. Biol. Chem.">
        <title>Structural and functional insights into the regulation of Arabidopsis AGC VIIIa kinases.</title>
        <authorList>
            <person name="Zegzouti H."/>
            <person name="Li W."/>
            <person name="Lorenz T.C."/>
            <person name="Xie M."/>
            <person name="Payne C.T."/>
            <person name="Smith K."/>
            <person name="Glenny S."/>
            <person name="Payne G.S."/>
            <person name="Christensen S.K."/>
        </authorList>
    </citation>
    <scope>CATALYTIC ACTIVITY</scope>
    <scope>ACTIVITY REGULATION</scope>
    <scope>INTERACTION WITH PDPK1/PDK1</scope>
    <scope>SUBCELLULAR LOCATION</scope>
    <scope>AUTOPHOSPHORYLATION</scope>
    <scope>PHOSPHORYLATION BY PDPK1/PDK1</scope>
</reference>
<reference key="6">
    <citation type="journal article" date="2009" name="Plant J.">
        <title>Two Arabidopsis AGC kinases are critical for the polarized growth of pollen tubes.</title>
        <authorList>
            <person name="Zhang Y."/>
            <person name="He J."/>
            <person name="McCormick S."/>
        </authorList>
    </citation>
    <scope>FUNCTION</scope>
    <scope>TISSUE SPECIFICITY</scope>
    <scope>DISRUPTION PHENOTYPE</scope>
</reference>
<protein>
    <recommendedName>
        <fullName evidence="7">Serine/threonine-protein kinase AGC1-7</fullName>
        <ecNumber evidence="3">2.7.11.1</ecNumber>
    </recommendedName>
    <alternativeName>
        <fullName evidence="5">AGC serine/threonine-protein kinase subfamily 1 member 7</fullName>
    </alternativeName>
</protein>
<proteinExistence type="evidence at protein level"/>
<keyword id="KW-0067">ATP-binding</keyword>
<keyword id="KW-0963">Cytoplasm</keyword>
<keyword id="KW-0341">Growth regulation</keyword>
<keyword id="KW-0418">Kinase</keyword>
<keyword id="KW-0547">Nucleotide-binding</keyword>
<keyword id="KW-1185">Reference proteome</keyword>
<keyword id="KW-0723">Serine/threonine-protein kinase</keyword>
<keyword id="KW-0808">Transferase</keyword>
<name>AGC17_ARATH</name>
<evidence type="ECO:0000255" key="1">
    <source>
        <dbReference type="PROSITE-ProRule" id="PRU00159"/>
    </source>
</evidence>
<evidence type="ECO:0000256" key="2">
    <source>
        <dbReference type="SAM" id="MobiDB-lite"/>
    </source>
</evidence>
<evidence type="ECO:0000269" key="3">
    <source>
    </source>
</evidence>
<evidence type="ECO:0000269" key="4">
    <source>
    </source>
</evidence>
<evidence type="ECO:0000303" key="5">
    <source>
    </source>
</evidence>
<evidence type="ECO:0000303" key="6">
    <source>
    </source>
</evidence>
<evidence type="ECO:0000305" key="7"/>
<evidence type="ECO:0000312" key="8">
    <source>
        <dbReference type="Araport" id="AT1G79250"/>
    </source>
</evidence>
<evidence type="ECO:0000312" key="9">
    <source>
        <dbReference type="EMBL" id="AAC17041.1"/>
    </source>
</evidence>
<sequence>MLTKPGKKLDSSESTHHTTSSNYPPLDIVHQTPQPRKEMQQKPLFDPKKMDNLIKPEPAGFTNHHRPNPSPKIPSSPGSNMTESQSNLNTKPNNNNSNNNSNMSSRSNSIESTSSNPSKPHTGGDIRWDAVNTLTSKGVQLGISDFRLLKRLGYGDIGSVYLVELRGTITYFAMKVMDKASLASRNKLLRAQTEREILSQLDHPFLPTLYSHFETDKFYCLVMEFCGGGNLYSLRQKQPNKCFTEDAARFFASEVLLALEYLHMLGIVYRDLKPENVLVRDDGHIMLSDFDLSLRCSVSPTLVKSSSVHAAGGGSGSSRPVGLIDEDAAVQGCIQPSTFFPRILQSSKKNRKAKSDFGLFVNGSMPELMAEPTNVKSMSFVGTHEYLAPEIIRGEGHGSAVDWWTFGIFIYELLYGATPFKGQGNRATLHNVIGQALRFPEVPHVSSAARDLIKGLLVKEPQKRIAYKRGATEIKQHPFFEGVNWALIRSATPPHVPEPVDFSCYASKDKESMAAVDGGGKKNNNGAGGGCSTGGGDNKPNGDCNDPDYIDFEYF</sequence>